<proteinExistence type="inferred from homology"/>
<keyword id="KW-0997">Cell inner membrane</keyword>
<keyword id="KW-1003">Cell membrane</keyword>
<keyword id="KW-0350">Heme biosynthesis</keyword>
<keyword id="KW-0472">Membrane</keyword>
<keyword id="KW-1185">Reference proteome</keyword>
<keyword id="KW-0808">Transferase</keyword>
<keyword id="KW-0812">Transmembrane</keyword>
<keyword id="KW-1133">Transmembrane helix</keyword>
<organism>
    <name type="scientific">Jannaschia sp. (strain CCS1)</name>
    <dbReference type="NCBI Taxonomy" id="290400"/>
    <lineage>
        <taxon>Bacteria</taxon>
        <taxon>Pseudomonadati</taxon>
        <taxon>Pseudomonadota</taxon>
        <taxon>Alphaproteobacteria</taxon>
        <taxon>Rhodobacterales</taxon>
        <taxon>Roseobacteraceae</taxon>
        <taxon>Jannaschia</taxon>
    </lineage>
</organism>
<reference key="1">
    <citation type="submission" date="2006-02" db="EMBL/GenBank/DDBJ databases">
        <title>Complete sequence of chromosome of Jannaschia sp. CCS1.</title>
        <authorList>
            <consortium name="US DOE Joint Genome Institute"/>
            <person name="Copeland A."/>
            <person name="Lucas S."/>
            <person name="Lapidus A."/>
            <person name="Barry K."/>
            <person name="Detter J.C."/>
            <person name="Glavina del Rio T."/>
            <person name="Hammon N."/>
            <person name="Israni S."/>
            <person name="Pitluck S."/>
            <person name="Brettin T."/>
            <person name="Bruce D."/>
            <person name="Han C."/>
            <person name="Tapia R."/>
            <person name="Gilna P."/>
            <person name="Chertkov O."/>
            <person name="Saunders E."/>
            <person name="Schmutz J."/>
            <person name="Larimer F."/>
            <person name="Land M."/>
            <person name="Kyrpides N."/>
            <person name="Lykidis A."/>
            <person name="Moran M.A."/>
            <person name="Belas R."/>
            <person name="Ye W."/>
            <person name="Buchan A."/>
            <person name="Gonzalez J.M."/>
            <person name="Schell M.A."/>
            <person name="Richardson P."/>
        </authorList>
    </citation>
    <scope>NUCLEOTIDE SEQUENCE [LARGE SCALE GENOMIC DNA]</scope>
    <source>
        <strain>CCS1</strain>
    </source>
</reference>
<name>COXX_JANSC</name>
<gene>
    <name evidence="1" type="primary">ctaB</name>
    <name type="ordered locus">Jann_3154</name>
</gene>
<feature type="chain" id="PRO_0000327064" description="Protoheme IX farnesyltransferase">
    <location>
        <begin position="1"/>
        <end position="309"/>
    </location>
</feature>
<feature type="transmembrane region" description="Helical" evidence="1">
    <location>
        <begin position="30"/>
        <end position="49"/>
    </location>
</feature>
<feature type="transmembrane region" description="Helical" evidence="1">
    <location>
        <begin position="53"/>
        <end position="75"/>
    </location>
</feature>
<feature type="transmembrane region" description="Helical" evidence="1">
    <location>
        <begin position="98"/>
        <end position="118"/>
    </location>
</feature>
<feature type="transmembrane region" description="Helical" evidence="1">
    <location>
        <begin position="123"/>
        <end position="143"/>
    </location>
</feature>
<feature type="transmembrane region" description="Helical" evidence="1">
    <location>
        <begin position="151"/>
        <end position="171"/>
    </location>
</feature>
<feature type="transmembrane region" description="Helical" evidence="1">
    <location>
        <begin position="178"/>
        <end position="198"/>
    </location>
</feature>
<feature type="transmembrane region" description="Helical" evidence="1">
    <location>
        <begin position="224"/>
        <end position="244"/>
    </location>
</feature>
<feature type="transmembrane region" description="Helical" evidence="1">
    <location>
        <begin position="247"/>
        <end position="267"/>
    </location>
</feature>
<feature type="transmembrane region" description="Helical" evidence="1">
    <location>
        <begin position="285"/>
        <end position="305"/>
    </location>
</feature>
<sequence>MSDFTAQTTTEPREYDAGFGDYFALLKPRVMSLVVFTALVGILVAPGGVSPMIGFTAILFIALGAGASGALNMWYDADIDAVMKRTAKRPVPAGKVPAGEALTLGLWLSAISVAMLGLATNWVAAGLLAFTIFFYAVVYSMWLKRATPWNIVIGGAAGSFPPMIGWAAVTGDVSLASVLMFGIIFMWTPPHFWALALFLKKDYNNAGVPMLTVTHGRTETRRQILIYTILLVPVALGLVLTEVAGPVYLITALVCNAIFLKGAYDIWKRDEAMAEADGYAVEKKVFKFSLLYLFLHFGALLLDAIWRLI</sequence>
<comment type="function">
    <text evidence="1">Converts heme B (protoheme IX) to heme O by substitution of the vinyl group on carbon 2 of heme B porphyrin ring with a hydroxyethyl farnesyl side group.</text>
</comment>
<comment type="catalytic activity">
    <reaction evidence="1">
        <text>heme b + (2E,6E)-farnesyl diphosphate + H2O = Fe(II)-heme o + diphosphate</text>
        <dbReference type="Rhea" id="RHEA:28070"/>
        <dbReference type="ChEBI" id="CHEBI:15377"/>
        <dbReference type="ChEBI" id="CHEBI:33019"/>
        <dbReference type="ChEBI" id="CHEBI:60344"/>
        <dbReference type="ChEBI" id="CHEBI:60530"/>
        <dbReference type="ChEBI" id="CHEBI:175763"/>
        <dbReference type="EC" id="2.5.1.141"/>
    </reaction>
</comment>
<comment type="pathway">
    <text evidence="1">Porphyrin-containing compound metabolism; heme O biosynthesis; heme O from protoheme: step 1/1.</text>
</comment>
<comment type="subunit">
    <text evidence="1">Interacts with CtaA.</text>
</comment>
<comment type="subcellular location">
    <subcellularLocation>
        <location evidence="1">Cell inner membrane</location>
        <topology evidence="1">Multi-pass membrane protein</topology>
    </subcellularLocation>
</comment>
<comment type="miscellaneous">
    <text evidence="1">Carbon 2 of the heme B porphyrin ring is defined according to the Fischer nomenclature.</text>
</comment>
<comment type="similarity">
    <text evidence="1">Belongs to the UbiA prenyltransferase family. Protoheme IX farnesyltransferase subfamily.</text>
</comment>
<dbReference type="EC" id="2.5.1.141" evidence="1"/>
<dbReference type="EMBL" id="CP000264">
    <property type="protein sequence ID" value="ABD56071.1"/>
    <property type="molecule type" value="Genomic_DNA"/>
</dbReference>
<dbReference type="RefSeq" id="WP_011456275.1">
    <property type="nucleotide sequence ID" value="NC_007802.1"/>
</dbReference>
<dbReference type="SMR" id="Q28MJ1"/>
<dbReference type="STRING" id="290400.Jann_3154"/>
<dbReference type="KEGG" id="jan:Jann_3154"/>
<dbReference type="eggNOG" id="COG0109">
    <property type="taxonomic scope" value="Bacteria"/>
</dbReference>
<dbReference type="HOGENOM" id="CLU_029631_0_2_5"/>
<dbReference type="OrthoDB" id="9814417at2"/>
<dbReference type="UniPathway" id="UPA00834">
    <property type="reaction ID" value="UER00712"/>
</dbReference>
<dbReference type="Proteomes" id="UP000008326">
    <property type="component" value="Chromosome"/>
</dbReference>
<dbReference type="GO" id="GO:0005886">
    <property type="term" value="C:plasma membrane"/>
    <property type="evidence" value="ECO:0007669"/>
    <property type="project" value="UniProtKB-SubCell"/>
</dbReference>
<dbReference type="GO" id="GO:0008495">
    <property type="term" value="F:protoheme IX farnesyltransferase activity"/>
    <property type="evidence" value="ECO:0007669"/>
    <property type="project" value="UniProtKB-UniRule"/>
</dbReference>
<dbReference type="GO" id="GO:0048034">
    <property type="term" value="P:heme O biosynthetic process"/>
    <property type="evidence" value="ECO:0007669"/>
    <property type="project" value="UniProtKB-UniRule"/>
</dbReference>
<dbReference type="CDD" id="cd13957">
    <property type="entry name" value="PT_UbiA_Cox10"/>
    <property type="match status" value="1"/>
</dbReference>
<dbReference type="Gene3D" id="1.10.357.140">
    <property type="entry name" value="UbiA prenyltransferase"/>
    <property type="match status" value="1"/>
</dbReference>
<dbReference type="HAMAP" id="MF_00154">
    <property type="entry name" value="CyoE_CtaB"/>
    <property type="match status" value="1"/>
</dbReference>
<dbReference type="InterPro" id="IPR006369">
    <property type="entry name" value="Protohaem_IX_farnesylTrfase"/>
</dbReference>
<dbReference type="InterPro" id="IPR000537">
    <property type="entry name" value="UbiA_prenyltransferase"/>
</dbReference>
<dbReference type="InterPro" id="IPR030470">
    <property type="entry name" value="UbiA_prenylTrfase_CS"/>
</dbReference>
<dbReference type="InterPro" id="IPR044878">
    <property type="entry name" value="UbiA_sf"/>
</dbReference>
<dbReference type="NCBIfam" id="TIGR01473">
    <property type="entry name" value="cyoE_ctaB"/>
    <property type="match status" value="1"/>
</dbReference>
<dbReference type="NCBIfam" id="NF003349">
    <property type="entry name" value="PRK04375.1-2"/>
    <property type="match status" value="1"/>
</dbReference>
<dbReference type="PANTHER" id="PTHR43448:SF7">
    <property type="entry name" value="4-HYDROXYBENZOATE SOLANESYLTRANSFERASE"/>
    <property type="match status" value="1"/>
</dbReference>
<dbReference type="PANTHER" id="PTHR43448">
    <property type="entry name" value="PROTOHEME IX FARNESYLTRANSFERASE, MITOCHONDRIAL"/>
    <property type="match status" value="1"/>
</dbReference>
<dbReference type="Pfam" id="PF01040">
    <property type="entry name" value="UbiA"/>
    <property type="match status" value="1"/>
</dbReference>
<dbReference type="PROSITE" id="PS00943">
    <property type="entry name" value="UBIA"/>
    <property type="match status" value="1"/>
</dbReference>
<protein>
    <recommendedName>
        <fullName evidence="1">Protoheme IX farnesyltransferase</fullName>
        <ecNumber evidence="1">2.5.1.141</ecNumber>
    </recommendedName>
    <alternativeName>
        <fullName evidence="1">Heme B farnesyltransferase</fullName>
    </alternativeName>
    <alternativeName>
        <fullName evidence="1">Heme O synthase</fullName>
    </alternativeName>
</protein>
<accession>Q28MJ1</accession>
<evidence type="ECO:0000255" key="1">
    <source>
        <dbReference type="HAMAP-Rule" id="MF_00154"/>
    </source>
</evidence>